<gene>
    <name evidence="1" type="primary">aroQ</name>
    <name type="ordered locus">FTW_1599</name>
</gene>
<dbReference type="EC" id="4.2.1.10" evidence="1"/>
<dbReference type="EMBL" id="CP000608">
    <property type="protein sequence ID" value="ABO47299.1"/>
    <property type="molecule type" value="Genomic_DNA"/>
</dbReference>
<dbReference type="RefSeq" id="WP_003016972.1">
    <property type="nucleotide sequence ID" value="NC_009257.1"/>
</dbReference>
<dbReference type="SMR" id="A4IZE9"/>
<dbReference type="GeneID" id="75263952"/>
<dbReference type="KEGG" id="ftw:FTW_1599"/>
<dbReference type="HOGENOM" id="CLU_090968_1_0_6"/>
<dbReference type="UniPathway" id="UPA00053">
    <property type="reaction ID" value="UER00086"/>
</dbReference>
<dbReference type="GO" id="GO:0003855">
    <property type="term" value="F:3-dehydroquinate dehydratase activity"/>
    <property type="evidence" value="ECO:0007669"/>
    <property type="project" value="UniProtKB-UniRule"/>
</dbReference>
<dbReference type="GO" id="GO:0008652">
    <property type="term" value="P:amino acid biosynthetic process"/>
    <property type="evidence" value="ECO:0007669"/>
    <property type="project" value="UniProtKB-KW"/>
</dbReference>
<dbReference type="GO" id="GO:0009073">
    <property type="term" value="P:aromatic amino acid family biosynthetic process"/>
    <property type="evidence" value="ECO:0007669"/>
    <property type="project" value="UniProtKB-KW"/>
</dbReference>
<dbReference type="GO" id="GO:0009423">
    <property type="term" value="P:chorismate biosynthetic process"/>
    <property type="evidence" value="ECO:0007669"/>
    <property type="project" value="UniProtKB-UniRule"/>
</dbReference>
<dbReference type="GO" id="GO:0019631">
    <property type="term" value="P:quinate catabolic process"/>
    <property type="evidence" value="ECO:0007669"/>
    <property type="project" value="TreeGrafter"/>
</dbReference>
<dbReference type="CDD" id="cd00466">
    <property type="entry name" value="DHQase_II"/>
    <property type="match status" value="1"/>
</dbReference>
<dbReference type="Gene3D" id="3.40.50.9100">
    <property type="entry name" value="Dehydroquinase, class II"/>
    <property type="match status" value="1"/>
</dbReference>
<dbReference type="HAMAP" id="MF_00169">
    <property type="entry name" value="AroQ"/>
    <property type="match status" value="1"/>
</dbReference>
<dbReference type="InterPro" id="IPR001874">
    <property type="entry name" value="DHquinase_II"/>
</dbReference>
<dbReference type="InterPro" id="IPR018509">
    <property type="entry name" value="DHquinase_II_CS"/>
</dbReference>
<dbReference type="InterPro" id="IPR036441">
    <property type="entry name" value="DHquinase_II_sf"/>
</dbReference>
<dbReference type="NCBIfam" id="TIGR01088">
    <property type="entry name" value="aroQ"/>
    <property type="match status" value="1"/>
</dbReference>
<dbReference type="NCBIfam" id="NF003804">
    <property type="entry name" value="PRK05395.1-1"/>
    <property type="match status" value="1"/>
</dbReference>
<dbReference type="NCBIfam" id="NF003805">
    <property type="entry name" value="PRK05395.1-2"/>
    <property type="match status" value="1"/>
</dbReference>
<dbReference type="NCBIfam" id="NF003806">
    <property type="entry name" value="PRK05395.1-3"/>
    <property type="match status" value="1"/>
</dbReference>
<dbReference type="NCBIfam" id="NF003807">
    <property type="entry name" value="PRK05395.1-4"/>
    <property type="match status" value="1"/>
</dbReference>
<dbReference type="PANTHER" id="PTHR21272">
    <property type="entry name" value="CATABOLIC 3-DEHYDROQUINASE"/>
    <property type="match status" value="1"/>
</dbReference>
<dbReference type="PANTHER" id="PTHR21272:SF3">
    <property type="entry name" value="CATABOLIC 3-DEHYDROQUINASE"/>
    <property type="match status" value="1"/>
</dbReference>
<dbReference type="Pfam" id="PF01220">
    <property type="entry name" value="DHquinase_II"/>
    <property type="match status" value="1"/>
</dbReference>
<dbReference type="PIRSF" id="PIRSF001399">
    <property type="entry name" value="DHquinase_II"/>
    <property type="match status" value="1"/>
</dbReference>
<dbReference type="SUPFAM" id="SSF52304">
    <property type="entry name" value="Type II 3-dehydroquinate dehydratase"/>
    <property type="match status" value="1"/>
</dbReference>
<dbReference type="PROSITE" id="PS01029">
    <property type="entry name" value="DEHYDROQUINASE_II"/>
    <property type="match status" value="1"/>
</dbReference>
<keyword id="KW-0028">Amino-acid biosynthesis</keyword>
<keyword id="KW-0057">Aromatic amino acid biosynthesis</keyword>
<keyword id="KW-0456">Lyase</keyword>
<comment type="function">
    <text evidence="1">Catalyzes a trans-dehydration via an enolate intermediate.</text>
</comment>
<comment type="catalytic activity">
    <reaction evidence="1">
        <text>3-dehydroquinate = 3-dehydroshikimate + H2O</text>
        <dbReference type="Rhea" id="RHEA:21096"/>
        <dbReference type="ChEBI" id="CHEBI:15377"/>
        <dbReference type="ChEBI" id="CHEBI:16630"/>
        <dbReference type="ChEBI" id="CHEBI:32364"/>
        <dbReference type="EC" id="4.2.1.10"/>
    </reaction>
</comment>
<comment type="pathway">
    <text evidence="1">Metabolic intermediate biosynthesis; chorismate biosynthesis; chorismate from D-erythrose 4-phosphate and phosphoenolpyruvate: step 3/7.</text>
</comment>
<comment type="subunit">
    <text evidence="1">Homododecamer.</text>
</comment>
<comment type="similarity">
    <text evidence="1">Belongs to the type-II 3-dehydroquinase family.</text>
</comment>
<feature type="chain" id="PRO_1000077041" description="3-dehydroquinate dehydratase">
    <location>
        <begin position="1"/>
        <end position="145"/>
    </location>
</feature>
<feature type="active site" description="Proton acceptor" evidence="1">
    <location>
        <position position="22"/>
    </location>
</feature>
<feature type="active site" description="Proton donor" evidence="1">
    <location>
        <position position="97"/>
    </location>
</feature>
<feature type="binding site" evidence="1">
    <location>
        <position position="71"/>
    </location>
    <ligand>
        <name>substrate</name>
    </ligand>
</feature>
<feature type="binding site" evidence="1">
    <location>
        <position position="77"/>
    </location>
    <ligand>
        <name>substrate</name>
    </ligand>
</feature>
<feature type="binding site" evidence="1">
    <location>
        <position position="84"/>
    </location>
    <ligand>
        <name>substrate</name>
    </ligand>
</feature>
<feature type="binding site" evidence="1">
    <location>
        <begin position="98"/>
        <end position="99"/>
    </location>
    <ligand>
        <name>substrate</name>
    </ligand>
</feature>
<feature type="binding site" evidence="1">
    <location>
        <position position="108"/>
    </location>
    <ligand>
        <name>substrate</name>
    </ligand>
</feature>
<feature type="site" description="Transition state stabilizer" evidence="1">
    <location>
        <position position="17"/>
    </location>
</feature>
<proteinExistence type="inferred from homology"/>
<evidence type="ECO:0000255" key="1">
    <source>
        <dbReference type="HAMAP-Rule" id="MF_00169"/>
    </source>
</evidence>
<accession>A4IZE9</accession>
<reference key="1">
    <citation type="journal article" date="2007" name="PLoS ONE">
        <title>Complete genomic characterization of a pathogenic A.II strain of Francisella tularensis subspecies tularensis.</title>
        <authorList>
            <person name="Beckstrom-Sternberg S.M."/>
            <person name="Auerbach R.K."/>
            <person name="Godbole S."/>
            <person name="Pearson J.V."/>
            <person name="Beckstrom-Sternberg J.S."/>
            <person name="Deng Z."/>
            <person name="Munk C."/>
            <person name="Kubota K."/>
            <person name="Zhou Y."/>
            <person name="Bruce D."/>
            <person name="Noronha J."/>
            <person name="Scheuermann R.H."/>
            <person name="Wang A."/>
            <person name="Wei X."/>
            <person name="Wang J."/>
            <person name="Hao J."/>
            <person name="Wagner D.M."/>
            <person name="Brettin T.S."/>
            <person name="Brown N."/>
            <person name="Gilna P."/>
            <person name="Keim P.S."/>
        </authorList>
    </citation>
    <scope>NUCLEOTIDE SEQUENCE [LARGE SCALE GENOMIC DNA]</scope>
    <source>
        <strain>WY96-3418</strain>
    </source>
</reference>
<protein>
    <recommendedName>
        <fullName evidence="1">3-dehydroquinate dehydratase</fullName>
        <shortName evidence="1">3-dehydroquinase</shortName>
        <ecNumber evidence="1">4.2.1.10</ecNumber>
    </recommendedName>
    <alternativeName>
        <fullName evidence="1">Type II DHQase</fullName>
    </alternativeName>
</protein>
<sequence length="145" mass="16330">MDVLVINGPNLNLLGTRQPQFYGHKTLADINNDLLKIAKENNINIDFYQSNHEGQIIDKIQQTAAKIIIINPAAFTHTSVAIRDAFLAINKPFIEIHLSNIYNREEFRTKSFLSDIAYGCIFGFGPNGYTLALIEAINYINMKGE</sequence>
<name>AROQ_FRATW</name>
<organism>
    <name type="scientific">Francisella tularensis subsp. tularensis (strain WY96-3418)</name>
    <dbReference type="NCBI Taxonomy" id="418136"/>
    <lineage>
        <taxon>Bacteria</taxon>
        <taxon>Pseudomonadati</taxon>
        <taxon>Pseudomonadota</taxon>
        <taxon>Gammaproteobacteria</taxon>
        <taxon>Thiotrichales</taxon>
        <taxon>Francisellaceae</taxon>
        <taxon>Francisella</taxon>
    </lineage>
</organism>